<proteinExistence type="inferred from homology"/>
<evidence type="ECO:0000255" key="1">
    <source>
        <dbReference type="HAMAP-Rule" id="MF_00015"/>
    </source>
</evidence>
<sequence length="202" mass="22400">MKALTTRQQEVYDLIRDHISSTGMPPTRAEIAMRLGFRSPNAAEEHLKALARKGVIEIISGASRGIRLLMEDEEGLPLIGRVAAGEPLLAQQHIEGHYKVDPSLFKPSADFLLRVNGMSMRDIGILDGDLLAVHKTQDVRNGQVVVARIEDEVTVKRLKKHGNVVELLPENSEFQPIVVDLRQQNFTIEGLAVGVIRNGDWV</sequence>
<reference key="1">
    <citation type="submission" date="2007-09" db="EMBL/GenBank/DDBJ databases">
        <title>Complete sequence of chromosome of Serratia proteamaculans 568.</title>
        <authorList>
            <consortium name="US DOE Joint Genome Institute"/>
            <person name="Copeland A."/>
            <person name="Lucas S."/>
            <person name="Lapidus A."/>
            <person name="Barry K."/>
            <person name="Glavina del Rio T."/>
            <person name="Dalin E."/>
            <person name="Tice H."/>
            <person name="Pitluck S."/>
            <person name="Chain P."/>
            <person name="Malfatti S."/>
            <person name="Shin M."/>
            <person name="Vergez L."/>
            <person name="Schmutz J."/>
            <person name="Larimer F."/>
            <person name="Land M."/>
            <person name="Hauser L."/>
            <person name="Kyrpides N."/>
            <person name="Kim E."/>
            <person name="Taghavi S."/>
            <person name="Newman L."/>
            <person name="Vangronsveld J."/>
            <person name="van der Lelie D."/>
            <person name="Richardson P."/>
        </authorList>
    </citation>
    <scope>NUCLEOTIDE SEQUENCE [LARGE SCALE GENOMIC DNA]</scope>
    <source>
        <strain>568</strain>
    </source>
</reference>
<organism>
    <name type="scientific">Serratia proteamaculans (strain 568)</name>
    <dbReference type="NCBI Taxonomy" id="399741"/>
    <lineage>
        <taxon>Bacteria</taxon>
        <taxon>Pseudomonadati</taxon>
        <taxon>Pseudomonadota</taxon>
        <taxon>Gammaproteobacteria</taxon>
        <taxon>Enterobacterales</taxon>
        <taxon>Yersiniaceae</taxon>
        <taxon>Serratia</taxon>
    </lineage>
</organism>
<feature type="chain" id="PRO_1000057134" description="LexA repressor">
    <location>
        <begin position="1"/>
        <end position="202"/>
    </location>
</feature>
<feature type="DNA-binding region" description="H-T-H motif" evidence="1">
    <location>
        <begin position="28"/>
        <end position="48"/>
    </location>
</feature>
<feature type="active site" description="For autocatalytic cleavage activity" evidence="1">
    <location>
        <position position="119"/>
    </location>
</feature>
<feature type="active site" description="For autocatalytic cleavage activity" evidence="1">
    <location>
        <position position="156"/>
    </location>
</feature>
<feature type="site" description="Cleavage; by autolysis" evidence="1">
    <location>
        <begin position="84"/>
        <end position="85"/>
    </location>
</feature>
<keyword id="KW-0068">Autocatalytic cleavage</keyword>
<keyword id="KW-0227">DNA damage</keyword>
<keyword id="KW-0234">DNA repair</keyword>
<keyword id="KW-0235">DNA replication</keyword>
<keyword id="KW-0238">DNA-binding</keyword>
<keyword id="KW-0378">Hydrolase</keyword>
<keyword id="KW-0678">Repressor</keyword>
<keyword id="KW-0742">SOS response</keyword>
<keyword id="KW-0804">Transcription</keyword>
<keyword id="KW-0805">Transcription regulation</keyword>
<name>LEXA_SERP5</name>
<comment type="function">
    <text evidence="1">Represses a number of genes involved in the response to DNA damage (SOS response), including recA and lexA. Binds to the 16 bp palindromic sequence 5'-CTGTATATATATACAG-3'. In the presence of single-stranded DNA, RecA interacts with LexA causing an autocatalytic cleavage which disrupts the DNA-binding part of LexA, leading to derepression of the SOS regulon and eventually DNA repair.</text>
</comment>
<comment type="catalytic activity">
    <reaction evidence="1">
        <text>Hydrolysis of Ala-|-Gly bond in repressor LexA.</text>
        <dbReference type="EC" id="3.4.21.88"/>
    </reaction>
</comment>
<comment type="subunit">
    <text evidence="1">Homodimer.</text>
</comment>
<comment type="similarity">
    <text evidence="1">Belongs to the peptidase S24 family.</text>
</comment>
<dbReference type="EC" id="3.4.21.88" evidence="1"/>
<dbReference type="EMBL" id="CP000826">
    <property type="protein sequence ID" value="ABV43554.1"/>
    <property type="molecule type" value="Genomic_DNA"/>
</dbReference>
<dbReference type="SMR" id="A8GKB4"/>
<dbReference type="STRING" id="399741.Spro_4460"/>
<dbReference type="MEROPS" id="S24.001"/>
<dbReference type="KEGG" id="spe:Spro_4460"/>
<dbReference type="eggNOG" id="COG1974">
    <property type="taxonomic scope" value="Bacteria"/>
</dbReference>
<dbReference type="HOGENOM" id="CLU_066192_45_3_6"/>
<dbReference type="OrthoDB" id="9802364at2"/>
<dbReference type="GO" id="GO:0003677">
    <property type="term" value="F:DNA binding"/>
    <property type="evidence" value="ECO:0007669"/>
    <property type="project" value="UniProtKB-UniRule"/>
</dbReference>
<dbReference type="GO" id="GO:0004252">
    <property type="term" value="F:serine-type endopeptidase activity"/>
    <property type="evidence" value="ECO:0007669"/>
    <property type="project" value="UniProtKB-UniRule"/>
</dbReference>
<dbReference type="GO" id="GO:0006281">
    <property type="term" value="P:DNA repair"/>
    <property type="evidence" value="ECO:0007669"/>
    <property type="project" value="UniProtKB-UniRule"/>
</dbReference>
<dbReference type="GO" id="GO:0006260">
    <property type="term" value="P:DNA replication"/>
    <property type="evidence" value="ECO:0007669"/>
    <property type="project" value="UniProtKB-UniRule"/>
</dbReference>
<dbReference type="GO" id="GO:0045892">
    <property type="term" value="P:negative regulation of DNA-templated transcription"/>
    <property type="evidence" value="ECO:0007669"/>
    <property type="project" value="UniProtKB-UniRule"/>
</dbReference>
<dbReference type="GO" id="GO:0006508">
    <property type="term" value="P:proteolysis"/>
    <property type="evidence" value="ECO:0007669"/>
    <property type="project" value="InterPro"/>
</dbReference>
<dbReference type="GO" id="GO:0009432">
    <property type="term" value="P:SOS response"/>
    <property type="evidence" value="ECO:0007669"/>
    <property type="project" value="UniProtKB-UniRule"/>
</dbReference>
<dbReference type="CDD" id="cd06529">
    <property type="entry name" value="S24_LexA-like"/>
    <property type="match status" value="1"/>
</dbReference>
<dbReference type="FunFam" id="1.10.10.10:FF:000009">
    <property type="entry name" value="LexA repressor"/>
    <property type="match status" value="1"/>
</dbReference>
<dbReference type="FunFam" id="2.10.109.10:FF:000001">
    <property type="entry name" value="LexA repressor"/>
    <property type="match status" value="1"/>
</dbReference>
<dbReference type="Gene3D" id="2.10.109.10">
    <property type="entry name" value="Umud Fragment, subunit A"/>
    <property type="match status" value="1"/>
</dbReference>
<dbReference type="Gene3D" id="1.10.10.10">
    <property type="entry name" value="Winged helix-like DNA-binding domain superfamily/Winged helix DNA-binding domain"/>
    <property type="match status" value="1"/>
</dbReference>
<dbReference type="HAMAP" id="MF_00015">
    <property type="entry name" value="LexA"/>
    <property type="match status" value="1"/>
</dbReference>
<dbReference type="InterPro" id="IPR006200">
    <property type="entry name" value="LexA"/>
</dbReference>
<dbReference type="InterPro" id="IPR039418">
    <property type="entry name" value="LexA-like"/>
</dbReference>
<dbReference type="InterPro" id="IPR036286">
    <property type="entry name" value="LexA/Signal_pep-like_sf"/>
</dbReference>
<dbReference type="InterPro" id="IPR006199">
    <property type="entry name" value="LexA_DNA-bd_dom"/>
</dbReference>
<dbReference type="InterPro" id="IPR050077">
    <property type="entry name" value="LexA_repressor"/>
</dbReference>
<dbReference type="InterPro" id="IPR006197">
    <property type="entry name" value="Peptidase_S24_LexA"/>
</dbReference>
<dbReference type="InterPro" id="IPR015927">
    <property type="entry name" value="Peptidase_S24_S26A/B/C"/>
</dbReference>
<dbReference type="InterPro" id="IPR036388">
    <property type="entry name" value="WH-like_DNA-bd_sf"/>
</dbReference>
<dbReference type="InterPro" id="IPR036390">
    <property type="entry name" value="WH_DNA-bd_sf"/>
</dbReference>
<dbReference type="NCBIfam" id="TIGR00498">
    <property type="entry name" value="lexA"/>
    <property type="match status" value="1"/>
</dbReference>
<dbReference type="PANTHER" id="PTHR33516">
    <property type="entry name" value="LEXA REPRESSOR"/>
    <property type="match status" value="1"/>
</dbReference>
<dbReference type="PANTHER" id="PTHR33516:SF2">
    <property type="entry name" value="LEXA REPRESSOR-RELATED"/>
    <property type="match status" value="1"/>
</dbReference>
<dbReference type="Pfam" id="PF01726">
    <property type="entry name" value="LexA_DNA_bind"/>
    <property type="match status" value="1"/>
</dbReference>
<dbReference type="Pfam" id="PF00717">
    <property type="entry name" value="Peptidase_S24"/>
    <property type="match status" value="1"/>
</dbReference>
<dbReference type="PRINTS" id="PR00726">
    <property type="entry name" value="LEXASERPTASE"/>
</dbReference>
<dbReference type="SUPFAM" id="SSF51306">
    <property type="entry name" value="LexA/Signal peptidase"/>
    <property type="match status" value="1"/>
</dbReference>
<dbReference type="SUPFAM" id="SSF46785">
    <property type="entry name" value="Winged helix' DNA-binding domain"/>
    <property type="match status" value="1"/>
</dbReference>
<accession>A8GKB4</accession>
<protein>
    <recommendedName>
        <fullName evidence="1">LexA repressor</fullName>
        <ecNumber evidence="1">3.4.21.88</ecNumber>
    </recommendedName>
</protein>
<gene>
    <name evidence="1" type="primary">lexA</name>
    <name type="ordered locus">Spro_4460</name>
</gene>